<accession>B1J2J9</accession>
<protein>
    <recommendedName>
        <fullName evidence="1">Uroporphyrinogen decarboxylase</fullName>
        <shortName evidence="1">UPD</shortName>
        <shortName evidence="1">URO-D</shortName>
        <ecNumber evidence="1">4.1.1.37</ecNumber>
    </recommendedName>
</protein>
<gene>
    <name evidence="1" type="primary">hemE</name>
    <name type="ordered locus">PputW619_0392</name>
</gene>
<feature type="chain" id="PRO_1000100009" description="Uroporphyrinogen decarboxylase">
    <location>
        <begin position="1"/>
        <end position="354"/>
    </location>
</feature>
<feature type="binding site" evidence="1">
    <location>
        <begin position="27"/>
        <end position="31"/>
    </location>
    <ligand>
        <name>substrate</name>
    </ligand>
</feature>
<feature type="binding site" evidence="1">
    <location>
        <position position="77"/>
    </location>
    <ligand>
        <name>substrate</name>
    </ligand>
</feature>
<feature type="binding site" evidence="1">
    <location>
        <position position="154"/>
    </location>
    <ligand>
        <name>substrate</name>
    </ligand>
</feature>
<feature type="binding site" evidence="1">
    <location>
        <position position="209"/>
    </location>
    <ligand>
        <name>substrate</name>
    </ligand>
</feature>
<feature type="binding site" evidence="1">
    <location>
        <position position="327"/>
    </location>
    <ligand>
        <name>substrate</name>
    </ligand>
</feature>
<feature type="site" description="Transition state stabilizer" evidence="1">
    <location>
        <position position="77"/>
    </location>
</feature>
<evidence type="ECO:0000255" key="1">
    <source>
        <dbReference type="HAMAP-Rule" id="MF_00218"/>
    </source>
</evidence>
<dbReference type="EC" id="4.1.1.37" evidence="1"/>
<dbReference type="EMBL" id="CP000949">
    <property type="protein sequence ID" value="ACA70898.1"/>
    <property type="molecule type" value="Genomic_DNA"/>
</dbReference>
<dbReference type="SMR" id="B1J2J9"/>
<dbReference type="STRING" id="390235.PputW619_0392"/>
<dbReference type="KEGG" id="ppw:PputW619_0392"/>
<dbReference type="eggNOG" id="COG0407">
    <property type="taxonomic scope" value="Bacteria"/>
</dbReference>
<dbReference type="HOGENOM" id="CLU_040933_0_0_6"/>
<dbReference type="OrthoDB" id="9806656at2"/>
<dbReference type="UniPathway" id="UPA00251">
    <property type="reaction ID" value="UER00321"/>
</dbReference>
<dbReference type="GO" id="GO:0005829">
    <property type="term" value="C:cytosol"/>
    <property type="evidence" value="ECO:0007669"/>
    <property type="project" value="TreeGrafter"/>
</dbReference>
<dbReference type="GO" id="GO:0004853">
    <property type="term" value="F:uroporphyrinogen decarboxylase activity"/>
    <property type="evidence" value="ECO:0007669"/>
    <property type="project" value="UniProtKB-UniRule"/>
</dbReference>
<dbReference type="GO" id="GO:0019353">
    <property type="term" value="P:protoporphyrinogen IX biosynthetic process from glutamate"/>
    <property type="evidence" value="ECO:0007669"/>
    <property type="project" value="TreeGrafter"/>
</dbReference>
<dbReference type="CDD" id="cd00717">
    <property type="entry name" value="URO-D"/>
    <property type="match status" value="1"/>
</dbReference>
<dbReference type="FunFam" id="3.20.20.210:FF:000001">
    <property type="entry name" value="Uroporphyrinogen decarboxylase"/>
    <property type="match status" value="1"/>
</dbReference>
<dbReference type="Gene3D" id="3.20.20.210">
    <property type="match status" value="1"/>
</dbReference>
<dbReference type="HAMAP" id="MF_00218">
    <property type="entry name" value="URO_D"/>
    <property type="match status" value="1"/>
</dbReference>
<dbReference type="InterPro" id="IPR038071">
    <property type="entry name" value="UROD/MetE-like_sf"/>
</dbReference>
<dbReference type="InterPro" id="IPR006361">
    <property type="entry name" value="Uroporphyrinogen_deCO2ase_HemE"/>
</dbReference>
<dbReference type="InterPro" id="IPR000257">
    <property type="entry name" value="Uroporphyrinogen_deCOase"/>
</dbReference>
<dbReference type="NCBIfam" id="TIGR01464">
    <property type="entry name" value="hemE"/>
    <property type="match status" value="1"/>
</dbReference>
<dbReference type="PANTHER" id="PTHR21091">
    <property type="entry name" value="METHYLTETRAHYDROFOLATE:HOMOCYSTEINE METHYLTRANSFERASE RELATED"/>
    <property type="match status" value="1"/>
</dbReference>
<dbReference type="PANTHER" id="PTHR21091:SF169">
    <property type="entry name" value="UROPORPHYRINOGEN DECARBOXYLASE"/>
    <property type="match status" value="1"/>
</dbReference>
<dbReference type="Pfam" id="PF01208">
    <property type="entry name" value="URO-D"/>
    <property type="match status" value="1"/>
</dbReference>
<dbReference type="SUPFAM" id="SSF51726">
    <property type="entry name" value="UROD/MetE-like"/>
    <property type="match status" value="1"/>
</dbReference>
<dbReference type="PROSITE" id="PS00906">
    <property type="entry name" value="UROD_1"/>
    <property type="match status" value="1"/>
</dbReference>
<dbReference type="PROSITE" id="PS00907">
    <property type="entry name" value="UROD_2"/>
    <property type="match status" value="1"/>
</dbReference>
<reference key="1">
    <citation type="submission" date="2008-02" db="EMBL/GenBank/DDBJ databases">
        <title>Complete sequence of Pseudomonas putida W619.</title>
        <authorList>
            <person name="Copeland A."/>
            <person name="Lucas S."/>
            <person name="Lapidus A."/>
            <person name="Barry K."/>
            <person name="Detter J.C."/>
            <person name="Glavina del Rio T."/>
            <person name="Dalin E."/>
            <person name="Tice H."/>
            <person name="Pitluck S."/>
            <person name="Chain P."/>
            <person name="Malfatti S."/>
            <person name="Shin M."/>
            <person name="Vergez L."/>
            <person name="Schmutz J."/>
            <person name="Larimer F."/>
            <person name="Land M."/>
            <person name="Hauser L."/>
            <person name="Kyrpides N."/>
            <person name="Kim E."/>
            <person name="Taghavi S."/>
            <person name="Vangronsveld D."/>
            <person name="van der Lelie D."/>
            <person name="Richardson P."/>
        </authorList>
    </citation>
    <scope>NUCLEOTIDE SEQUENCE [LARGE SCALE GENOMIC DNA]</scope>
    <source>
        <strain>W619</strain>
    </source>
</reference>
<comment type="function">
    <text evidence="1">Catalyzes the decarboxylation of four acetate groups of uroporphyrinogen-III to yield coproporphyrinogen-III.</text>
</comment>
<comment type="catalytic activity">
    <reaction evidence="1">
        <text>uroporphyrinogen III + 4 H(+) = coproporphyrinogen III + 4 CO2</text>
        <dbReference type="Rhea" id="RHEA:19865"/>
        <dbReference type="ChEBI" id="CHEBI:15378"/>
        <dbReference type="ChEBI" id="CHEBI:16526"/>
        <dbReference type="ChEBI" id="CHEBI:57308"/>
        <dbReference type="ChEBI" id="CHEBI:57309"/>
        <dbReference type="EC" id="4.1.1.37"/>
    </reaction>
</comment>
<comment type="pathway">
    <text evidence="1">Porphyrin-containing compound metabolism; protoporphyrin-IX biosynthesis; coproporphyrinogen-III from 5-aminolevulinate: step 4/4.</text>
</comment>
<comment type="subunit">
    <text evidence="1">Homodimer.</text>
</comment>
<comment type="subcellular location">
    <subcellularLocation>
        <location evidence="1">Cytoplasm</location>
    </subcellularLocation>
</comment>
<comment type="similarity">
    <text evidence="1">Belongs to the uroporphyrinogen decarboxylase family.</text>
</comment>
<proteinExistence type="inferred from homology"/>
<name>DCUP_PSEPW</name>
<sequence length="354" mass="38919">MTALKNDRFLRALLKQPVDVTPVWMMRQAGRYLPEYRASRAKAGDFMSLCMNPQFACEVTLQPLERYPLDAAILFSDILTIPDAMGLGLYFETGEGPRFKKVISTPADIEALLIPDPQKDLGYVMDAVSTIRRELNGRVPLIGFSGSPWTLATYMVEGGSSKDFRKTKAMAYDNPQALHLLLDKLAQSVTSYLNGQILAGAQAVQIFDTWGGNLSAAAYQEFSLAYMRKIVSGLIREHDGRKVPVILFTKNGGLWLESIAEAGADALGLDWTCEIGDARRRVGDKVALQGNMDPTVLYAKPEAIRNEVARILASYGKGTGHVFNLGHGITPEVDPEHAGVFINAVHELSAQYHQ</sequence>
<keyword id="KW-0963">Cytoplasm</keyword>
<keyword id="KW-0210">Decarboxylase</keyword>
<keyword id="KW-0456">Lyase</keyword>
<keyword id="KW-0627">Porphyrin biosynthesis</keyword>
<organism>
    <name type="scientific">Pseudomonas putida (strain W619)</name>
    <dbReference type="NCBI Taxonomy" id="390235"/>
    <lineage>
        <taxon>Bacteria</taxon>
        <taxon>Pseudomonadati</taxon>
        <taxon>Pseudomonadota</taxon>
        <taxon>Gammaproteobacteria</taxon>
        <taxon>Pseudomonadales</taxon>
        <taxon>Pseudomonadaceae</taxon>
        <taxon>Pseudomonas</taxon>
    </lineage>
</organism>